<dbReference type="EMBL" id="AE013598">
    <property type="protein sequence ID" value="AAW76839.1"/>
    <property type="molecule type" value="Genomic_DNA"/>
</dbReference>
<dbReference type="SMR" id="Q5GWT2"/>
<dbReference type="STRING" id="291331.XOO3585"/>
<dbReference type="KEGG" id="xoo:XOO3585"/>
<dbReference type="HOGENOM" id="CLU_122625_1_3_6"/>
<dbReference type="Proteomes" id="UP000006735">
    <property type="component" value="Chromosome"/>
</dbReference>
<dbReference type="GO" id="GO:1990904">
    <property type="term" value="C:ribonucleoprotein complex"/>
    <property type="evidence" value="ECO:0007669"/>
    <property type="project" value="UniProtKB-KW"/>
</dbReference>
<dbReference type="GO" id="GO:0005840">
    <property type="term" value="C:ribosome"/>
    <property type="evidence" value="ECO:0007669"/>
    <property type="project" value="UniProtKB-KW"/>
</dbReference>
<dbReference type="GO" id="GO:0003735">
    <property type="term" value="F:structural constituent of ribosome"/>
    <property type="evidence" value="ECO:0007669"/>
    <property type="project" value="InterPro"/>
</dbReference>
<dbReference type="GO" id="GO:0000049">
    <property type="term" value="F:tRNA binding"/>
    <property type="evidence" value="ECO:0007669"/>
    <property type="project" value="UniProtKB-UniRule"/>
</dbReference>
<dbReference type="GO" id="GO:0006412">
    <property type="term" value="P:translation"/>
    <property type="evidence" value="ECO:0007669"/>
    <property type="project" value="UniProtKB-UniRule"/>
</dbReference>
<dbReference type="FunFam" id="3.30.70.600:FF:000001">
    <property type="entry name" value="30S ribosomal protein S10"/>
    <property type="match status" value="1"/>
</dbReference>
<dbReference type="Gene3D" id="3.30.70.600">
    <property type="entry name" value="Ribosomal protein S10 domain"/>
    <property type="match status" value="1"/>
</dbReference>
<dbReference type="HAMAP" id="MF_00508">
    <property type="entry name" value="Ribosomal_uS10"/>
    <property type="match status" value="1"/>
</dbReference>
<dbReference type="InterPro" id="IPR001848">
    <property type="entry name" value="Ribosomal_uS10"/>
</dbReference>
<dbReference type="InterPro" id="IPR018268">
    <property type="entry name" value="Ribosomal_uS10_CS"/>
</dbReference>
<dbReference type="InterPro" id="IPR027486">
    <property type="entry name" value="Ribosomal_uS10_dom"/>
</dbReference>
<dbReference type="InterPro" id="IPR036838">
    <property type="entry name" value="Ribosomal_uS10_dom_sf"/>
</dbReference>
<dbReference type="NCBIfam" id="NF001861">
    <property type="entry name" value="PRK00596.1"/>
    <property type="match status" value="1"/>
</dbReference>
<dbReference type="NCBIfam" id="TIGR01049">
    <property type="entry name" value="rpsJ_bact"/>
    <property type="match status" value="1"/>
</dbReference>
<dbReference type="PANTHER" id="PTHR11700">
    <property type="entry name" value="30S RIBOSOMAL PROTEIN S10 FAMILY MEMBER"/>
    <property type="match status" value="1"/>
</dbReference>
<dbReference type="Pfam" id="PF00338">
    <property type="entry name" value="Ribosomal_S10"/>
    <property type="match status" value="1"/>
</dbReference>
<dbReference type="PRINTS" id="PR00971">
    <property type="entry name" value="RIBOSOMALS10"/>
</dbReference>
<dbReference type="SMART" id="SM01403">
    <property type="entry name" value="Ribosomal_S10"/>
    <property type="match status" value="1"/>
</dbReference>
<dbReference type="SUPFAM" id="SSF54999">
    <property type="entry name" value="Ribosomal protein S10"/>
    <property type="match status" value="1"/>
</dbReference>
<dbReference type="PROSITE" id="PS00361">
    <property type="entry name" value="RIBOSOMAL_S10"/>
    <property type="match status" value="1"/>
</dbReference>
<feature type="chain" id="PRO_0000237119" description="Small ribosomal subunit protein uS10">
    <location>
        <begin position="1"/>
        <end position="104"/>
    </location>
</feature>
<gene>
    <name evidence="1" type="primary">rpsJ</name>
    <name type="ordered locus">XOO3585</name>
</gene>
<organism>
    <name type="scientific">Xanthomonas oryzae pv. oryzae (strain KACC10331 / KXO85)</name>
    <dbReference type="NCBI Taxonomy" id="291331"/>
    <lineage>
        <taxon>Bacteria</taxon>
        <taxon>Pseudomonadati</taxon>
        <taxon>Pseudomonadota</taxon>
        <taxon>Gammaproteobacteria</taxon>
        <taxon>Lysobacterales</taxon>
        <taxon>Lysobacteraceae</taxon>
        <taxon>Xanthomonas</taxon>
    </lineage>
</organism>
<evidence type="ECO:0000255" key="1">
    <source>
        <dbReference type="HAMAP-Rule" id="MF_00508"/>
    </source>
</evidence>
<evidence type="ECO:0000305" key="2"/>
<reference key="1">
    <citation type="journal article" date="2005" name="Nucleic Acids Res.">
        <title>The genome sequence of Xanthomonas oryzae pathovar oryzae KACC10331, the bacterial blight pathogen of rice.</title>
        <authorList>
            <person name="Lee B.-M."/>
            <person name="Park Y.-J."/>
            <person name="Park D.-S."/>
            <person name="Kang H.-W."/>
            <person name="Kim J.-G."/>
            <person name="Song E.-S."/>
            <person name="Park I.-C."/>
            <person name="Yoon U.-H."/>
            <person name="Hahn J.-H."/>
            <person name="Koo B.-S."/>
            <person name="Lee G.-B."/>
            <person name="Kim H."/>
            <person name="Park H.-S."/>
            <person name="Yoon K.-O."/>
            <person name="Kim J.-H."/>
            <person name="Jung C.-H."/>
            <person name="Koh N.-H."/>
            <person name="Seo J.-S."/>
            <person name="Go S.-J."/>
        </authorList>
    </citation>
    <scope>NUCLEOTIDE SEQUENCE [LARGE SCALE GENOMIC DNA]</scope>
    <source>
        <strain>KACC10331 / KXO85</strain>
    </source>
</reference>
<name>RS10_XANOR</name>
<comment type="function">
    <text evidence="1">Involved in the binding of tRNA to the ribosomes.</text>
</comment>
<comment type="subunit">
    <text evidence="1">Part of the 30S ribosomal subunit.</text>
</comment>
<comment type="similarity">
    <text evidence="1">Belongs to the universal ribosomal protein uS10 family.</text>
</comment>
<protein>
    <recommendedName>
        <fullName evidence="1">Small ribosomal subunit protein uS10</fullName>
    </recommendedName>
    <alternativeName>
        <fullName evidence="2">30S ribosomal protein S10</fullName>
    </alternativeName>
</protein>
<sequence>MSEKQKIRIRLKAFDHRLIDRWASEIVETAKRTGAQVRGPIPLPTKIERYTILVSPHADKDARDQYETRTHKRVLDIVDPNDKTVDALMKLELAAGVDVQIKLT</sequence>
<accession>Q5GWT2</accession>
<proteinExistence type="inferred from homology"/>
<keyword id="KW-1185">Reference proteome</keyword>
<keyword id="KW-0687">Ribonucleoprotein</keyword>
<keyword id="KW-0689">Ribosomal protein</keyword>